<evidence type="ECO:0000255" key="1">
    <source>
        <dbReference type="HAMAP-Rule" id="MF_01184"/>
    </source>
</evidence>
<accession>A5I0Y0</accession>
<accession>A7G2P0</accession>
<dbReference type="EC" id="2.4.2.22" evidence="1"/>
<dbReference type="EMBL" id="CP000727">
    <property type="protein sequence ID" value="ABS37190.1"/>
    <property type="molecule type" value="Genomic_DNA"/>
</dbReference>
<dbReference type="EMBL" id="AM412317">
    <property type="protein sequence ID" value="CAL82691.1"/>
    <property type="molecule type" value="Genomic_DNA"/>
</dbReference>
<dbReference type="RefSeq" id="WP_011948791.1">
    <property type="nucleotide sequence ID" value="NC_009698.1"/>
</dbReference>
<dbReference type="RefSeq" id="YP_001253667.1">
    <property type="nucleotide sequence ID" value="NC_009495.1"/>
</dbReference>
<dbReference type="RefSeq" id="YP_001387055.1">
    <property type="nucleotide sequence ID" value="NC_009698.1"/>
</dbReference>
<dbReference type="SMR" id="A5I0Y0"/>
<dbReference type="GeneID" id="5185394"/>
<dbReference type="KEGG" id="cbh:CLC_1188"/>
<dbReference type="KEGG" id="cbo:CBO1139"/>
<dbReference type="PATRIC" id="fig|413999.7.peg.1130"/>
<dbReference type="HOGENOM" id="CLU_099015_0_0_9"/>
<dbReference type="UniPathway" id="UPA00602">
    <property type="reaction ID" value="UER00658"/>
</dbReference>
<dbReference type="PRO" id="PR:A5I0Y0"/>
<dbReference type="Proteomes" id="UP000001986">
    <property type="component" value="Chromosome"/>
</dbReference>
<dbReference type="GO" id="GO:0005737">
    <property type="term" value="C:cytoplasm"/>
    <property type="evidence" value="ECO:0007669"/>
    <property type="project" value="UniProtKB-SubCell"/>
</dbReference>
<dbReference type="GO" id="GO:0000310">
    <property type="term" value="F:xanthine phosphoribosyltransferase activity"/>
    <property type="evidence" value="ECO:0007669"/>
    <property type="project" value="UniProtKB-UniRule"/>
</dbReference>
<dbReference type="GO" id="GO:0006166">
    <property type="term" value="P:purine ribonucleoside salvage"/>
    <property type="evidence" value="ECO:0007669"/>
    <property type="project" value="UniProtKB-KW"/>
</dbReference>
<dbReference type="GO" id="GO:0046110">
    <property type="term" value="P:xanthine metabolic process"/>
    <property type="evidence" value="ECO:0007669"/>
    <property type="project" value="InterPro"/>
</dbReference>
<dbReference type="GO" id="GO:0032265">
    <property type="term" value="P:XMP salvage"/>
    <property type="evidence" value="ECO:0007669"/>
    <property type="project" value="UniProtKB-UniRule"/>
</dbReference>
<dbReference type="CDD" id="cd06223">
    <property type="entry name" value="PRTases_typeI"/>
    <property type="match status" value="1"/>
</dbReference>
<dbReference type="Gene3D" id="3.40.50.2020">
    <property type="match status" value="1"/>
</dbReference>
<dbReference type="HAMAP" id="MF_01184">
    <property type="entry name" value="XPRTase"/>
    <property type="match status" value="1"/>
</dbReference>
<dbReference type="InterPro" id="IPR000836">
    <property type="entry name" value="PRibTrfase_dom"/>
</dbReference>
<dbReference type="InterPro" id="IPR029057">
    <property type="entry name" value="PRTase-like"/>
</dbReference>
<dbReference type="InterPro" id="IPR050118">
    <property type="entry name" value="Pur/Pyrimidine_PRTase"/>
</dbReference>
<dbReference type="InterPro" id="IPR010079">
    <property type="entry name" value="Xanthine_PRibTrfase"/>
</dbReference>
<dbReference type="NCBIfam" id="NF006671">
    <property type="entry name" value="PRK09219.1"/>
    <property type="match status" value="1"/>
</dbReference>
<dbReference type="NCBIfam" id="TIGR01744">
    <property type="entry name" value="XPRTase"/>
    <property type="match status" value="1"/>
</dbReference>
<dbReference type="PANTHER" id="PTHR43864">
    <property type="entry name" value="HYPOXANTHINE/GUANINE PHOSPHORIBOSYLTRANSFERASE"/>
    <property type="match status" value="1"/>
</dbReference>
<dbReference type="PANTHER" id="PTHR43864:SF1">
    <property type="entry name" value="XANTHINE PHOSPHORIBOSYLTRANSFERASE"/>
    <property type="match status" value="1"/>
</dbReference>
<dbReference type="Pfam" id="PF00156">
    <property type="entry name" value="Pribosyltran"/>
    <property type="match status" value="1"/>
</dbReference>
<dbReference type="SUPFAM" id="SSF53271">
    <property type="entry name" value="PRTase-like"/>
    <property type="match status" value="1"/>
</dbReference>
<name>XPT2_CLOBH</name>
<keyword id="KW-0963">Cytoplasm</keyword>
<keyword id="KW-0328">Glycosyltransferase</keyword>
<keyword id="KW-0660">Purine salvage</keyword>
<keyword id="KW-1185">Reference proteome</keyword>
<keyword id="KW-0808">Transferase</keyword>
<sequence length="190" mass="21240">MKLLEDKILKEGILLEGNILKVDSFLNHQMDVKLFNEIGKEFKRRFEGCSINKILTIEASGIGIATIVSQYFDFCPVVFAKKVDAANMDKDTYESKVHSFTKNKTYNVRVSKKYINKGDKILLIDDFLANGCAALGLIDIIKQGGAELIGVGIAIEKGFQKGRKELEKVGAKVESLAILDKIENDKVYFK</sequence>
<feature type="chain" id="PRO_0000339682" description="Xanthine phosphoribosyltransferase 2">
    <location>
        <begin position="1"/>
        <end position="190"/>
    </location>
</feature>
<feature type="binding site" evidence="1">
    <location>
        <position position="20"/>
    </location>
    <ligand>
        <name>xanthine</name>
        <dbReference type="ChEBI" id="CHEBI:17712"/>
    </ligand>
</feature>
<feature type="binding site" evidence="1">
    <location>
        <position position="27"/>
    </location>
    <ligand>
        <name>xanthine</name>
        <dbReference type="ChEBI" id="CHEBI:17712"/>
    </ligand>
</feature>
<feature type="binding site" evidence="1">
    <location>
        <begin position="129"/>
        <end position="133"/>
    </location>
    <ligand>
        <name>5-phospho-alpha-D-ribose 1-diphosphate</name>
        <dbReference type="ChEBI" id="CHEBI:58017"/>
    </ligand>
</feature>
<feature type="binding site" evidence="1">
    <location>
        <position position="157"/>
    </location>
    <ligand>
        <name>xanthine</name>
        <dbReference type="ChEBI" id="CHEBI:17712"/>
    </ligand>
</feature>
<organism>
    <name type="scientific">Clostridium botulinum (strain Hall / ATCC 3502 / NCTC 13319 / Type A)</name>
    <dbReference type="NCBI Taxonomy" id="441771"/>
    <lineage>
        <taxon>Bacteria</taxon>
        <taxon>Bacillati</taxon>
        <taxon>Bacillota</taxon>
        <taxon>Clostridia</taxon>
        <taxon>Eubacteriales</taxon>
        <taxon>Clostridiaceae</taxon>
        <taxon>Clostridium</taxon>
    </lineage>
</organism>
<proteinExistence type="inferred from homology"/>
<gene>
    <name evidence="1" type="primary">xpt2</name>
    <name type="ordered locus">CBO1139</name>
    <name type="ordered locus">CLC_1188</name>
</gene>
<comment type="function">
    <text evidence="1">Converts the preformed base xanthine, a product of nucleic acid breakdown, to xanthosine 5'-monophosphate (XMP), so it can be reused for RNA or DNA synthesis.</text>
</comment>
<comment type="catalytic activity">
    <reaction evidence="1">
        <text>XMP + diphosphate = xanthine + 5-phospho-alpha-D-ribose 1-diphosphate</text>
        <dbReference type="Rhea" id="RHEA:10800"/>
        <dbReference type="ChEBI" id="CHEBI:17712"/>
        <dbReference type="ChEBI" id="CHEBI:33019"/>
        <dbReference type="ChEBI" id="CHEBI:57464"/>
        <dbReference type="ChEBI" id="CHEBI:58017"/>
        <dbReference type="EC" id="2.4.2.22"/>
    </reaction>
</comment>
<comment type="pathway">
    <text evidence="1">Purine metabolism; XMP biosynthesis via salvage pathway; XMP from xanthine: step 1/1.</text>
</comment>
<comment type="subunit">
    <text evidence="1">Homodimer.</text>
</comment>
<comment type="subcellular location">
    <subcellularLocation>
        <location evidence="1">Cytoplasm</location>
    </subcellularLocation>
</comment>
<comment type="similarity">
    <text evidence="1">Belongs to the purine/pyrimidine phosphoribosyltransferase family. Xpt subfamily.</text>
</comment>
<protein>
    <recommendedName>
        <fullName evidence="1">Xanthine phosphoribosyltransferase 2</fullName>
        <shortName evidence="1">XPRTase 2</shortName>
        <ecNumber evidence="1">2.4.2.22</ecNumber>
    </recommendedName>
</protein>
<reference key="1">
    <citation type="journal article" date="2007" name="Genome Res.">
        <title>Genome sequence of a proteolytic (Group I) Clostridium botulinum strain Hall A and comparative analysis of the clostridial genomes.</title>
        <authorList>
            <person name="Sebaihia M."/>
            <person name="Peck M.W."/>
            <person name="Minton N.P."/>
            <person name="Thomson N.R."/>
            <person name="Holden M.T.G."/>
            <person name="Mitchell W.J."/>
            <person name="Carter A.T."/>
            <person name="Bentley S.D."/>
            <person name="Mason D.R."/>
            <person name="Crossman L."/>
            <person name="Paul C.J."/>
            <person name="Ivens A."/>
            <person name="Wells-Bennik M.H.J."/>
            <person name="Davis I.J."/>
            <person name="Cerdeno-Tarraga A.M."/>
            <person name="Churcher C."/>
            <person name="Quail M.A."/>
            <person name="Chillingworth T."/>
            <person name="Feltwell T."/>
            <person name="Fraser A."/>
            <person name="Goodhead I."/>
            <person name="Hance Z."/>
            <person name="Jagels K."/>
            <person name="Larke N."/>
            <person name="Maddison M."/>
            <person name="Moule S."/>
            <person name="Mungall K."/>
            <person name="Norbertczak H."/>
            <person name="Rabbinowitsch E."/>
            <person name="Sanders M."/>
            <person name="Simmonds M."/>
            <person name="White B."/>
            <person name="Whithead S."/>
            <person name="Parkhill J."/>
        </authorList>
    </citation>
    <scope>NUCLEOTIDE SEQUENCE [LARGE SCALE GENOMIC DNA]</scope>
    <source>
        <strain>Hall / ATCC 3502 / NCTC 13319 / Type A</strain>
    </source>
</reference>
<reference key="2">
    <citation type="journal article" date="2007" name="PLoS ONE">
        <title>Analysis of the neurotoxin complex genes in Clostridium botulinum A1-A4 and B1 strains: BoNT/A3, /Ba4 and /B1 clusters are located within plasmids.</title>
        <authorList>
            <person name="Smith T.J."/>
            <person name="Hill K.K."/>
            <person name="Foley B.T."/>
            <person name="Detter J.C."/>
            <person name="Munk A.C."/>
            <person name="Bruce D.C."/>
            <person name="Doggett N.A."/>
            <person name="Smith L.A."/>
            <person name="Marks J.D."/>
            <person name="Xie G."/>
            <person name="Brettin T.S."/>
        </authorList>
    </citation>
    <scope>NUCLEOTIDE SEQUENCE [LARGE SCALE GENOMIC DNA]</scope>
    <source>
        <strain>Hall / ATCC 3502 / NCTC 13319 / Type A</strain>
    </source>
</reference>